<sequence length="407" mass="44239">MQMDSPKSPLQPPTYGNLVTILSIDGGGIRGLIPAVILGFLESELQKLDGEEARLADYFDVIAGTSTGGLVTAMLTAPNKEGRPLFAASEIKDFYLEQCPKIFPQDHFPFSAAKKLVKSLTGPKYDGKYLHQLIHAKLGDTKLSQTLTNVVIPTFDIKHLQPTIFSSYEVKNHPLKDATLADIAISTSAAPTYLPAHFFKVEDLNGNAKEYNLIDGGVAANNPALLAIGEVTNEISGGSSDFFPIRPNDYGRFLVLSLGTGNHKAEEKFNAKEVAGWGLLNWLTHDNSTPIIDAFSQASSDMVDFHLSAVFRALHSEANYIRIQDDTLTGDAASVDIATVENLDILAKTGDELLKKPVARVNLDSGCNENAYETTNEHALIKLAGILSKEKKIRDIRSPHAKAPIRI</sequence>
<keyword id="KW-0963">Cytoplasm</keyword>
<keyword id="KW-0378">Hydrolase</keyword>
<keyword id="KW-0442">Lipid degradation</keyword>
<keyword id="KW-0443">Lipid metabolism</keyword>
<keyword id="KW-0597">Phosphoprotein</keyword>
<keyword id="KW-0611">Plant defense</keyword>
<keyword id="KW-1185">Reference proteome</keyword>
<organism>
    <name type="scientific">Arabidopsis thaliana</name>
    <name type="common">Mouse-ear cress</name>
    <dbReference type="NCBI Taxonomy" id="3702"/>
    <lineage>
        <taxon>Eukaryota</taxon>
        <taxon>Viridiplantae</taxon>
        <taxon>Streptophyta</taxon>
        <taxon>Embryophyta</taxon>
        <taxon>Tracheophyta</taxon>
        <taxon>Spermatophyta</taxon>
        <taxon>Magnoliopsida</taxon>
        <taxon>eudicotyledons</taxon>
        <taxon>Gunneridae</taxon>
        <taxon>Pentapetalae</taxon>
        <taxon>rosids</taxon>
        <taxon>malvids</taxon>
        <taxon>Brassicales</taxon>
        <taxon>Brassicaceae</taxon>
        <taxon>Camelineae</taxon>
        <taxon>Arabidopsis</taxon>
    </lineage>
</organism>
<feature type="chain" id="PRO_0000425814" description="Patatin-like protein 2">
    <location>
        <begin position="1"/>
        <end position="407"/>
    </location>
</feature>
<feature type="domain" description="PNPLA" evidence="3">
    <location>
        <begin position="22"/>
        <end position="228"/>
    </location>
</feature>
<feature type="short sequence motif" description="GXGXXG" evidence="3">
    <location>
        <begin position="26"/>
        <end position="31"/>
    </location>
</feature>
<feature type="short sequence motif" description="GXSXG" evidence="3">
    <location>
        <begin position="64"/>
        <end position="68"/>
    </location>
</feature>
<feature type="short sequence motif" description="DGA/G" evidence="3">
    <location>
        <begin position="215"/>
        <end position="217"/>
    </location>
</feature>
<feature type="active site" description="Nucleophile" evidence="3">
    <location>
        <position position="66"/>
    </location>
</feature>
<feature type="active site" description="Proton acceptor" evidence="3">
    <location>
        <position position="215"/>
    </location>
</feature>
<feature type="modified residue" description="Phosphoserine" evidence="2">
    <location>
        <position position="398"/>
    </location>
</feature>
<feature type="sequence conflict" description="In Ref. 4; AAM63157." evidence="9" ref="4">
    <original>A</original>
    <variation>E</variation>
    <location>
        <position position="384"/>
    </location>
</feature>
<comment type="function">
    <text evidence="6 7 8">Possesses non-specific lipolytic acyl hydrolase (LAH) activity. Catalyzes the hydrolysis of the galactolipids monogalactosyldiacylglycerol (MGDG) and digalactosyldiacylglycerol (DGDG), and less efficiently the phoshpolipids phosphatidylcholine (PC), phosphatidylethanolamine (PE), phosphatidylglycerol (PG), phosphatidic acid (PA), phosphatidylserine (PS) and phosphatidylinositol (PI). Favors the release of fatty acid at the sn-1 position for PC or PE and the sn-2 position for PG, PA, PS and PI. Negatively affects disease resistance to the necrotic fungal pathogen Botrytis cinerea and the avirulent bacteria Pseudomonas syringae by promoting cell death and reducing the efficiency of the hypersensitive response, respectively. However, PLP2 contributes to resistance to cucumber mosaic virus (CMV), an obligate parasite inducing hypersensitive response. May negatively regulate oxylipin production, possibly via participating in membrane repair that includes removal of oxidatively modified lipids.</text>
</comment>
<comment type="interaction">
    <interactant intactId="EBI-4443426">
        <id>O48723</id>
    </interactant>
    <interactant intactId="EBI-2651372">
        <id>Q39070</id>
        <label>CYCB2-2</label>
    </interactant>
    <organismsDiffer>false</organismsDiffer>
    <experiments>3</experiments>
</comment>
<comment type="interaction">
    <interactant intactId="EBI-4443426">
        <id>O48723</id>
    </interactant>
    <interactant intactId="EBI-4443426">
        <id>O48723</id>
        <label>PLP2</label>
    </interactant>
    <organismsDiffer>false</organismsDiffer>
    <experiments>4</experiments>
</comment>
<comment type="interaction">
    <interactant intactId="EBI-4443426">
        <id>O48723</id>
    </interactant>
    <interactant intactId="EBI-1238460">
        <id>Q9FHZ1</id>
        <label>SCL23</label>
    </interactant>
    <organismsDiffer>false</organismsDiffer>
    <experiments>5</experiments>
</comment>
<comment type="subcellular location">
    <subcellularLocation>
        <location evidence="4 6">Cytoplasm</location>
    </subcellularLocation>
</comment>
<comment type="tissue specificity">
    <text evidence="4">Expressed specifically in roots.</text>
</comment>
<comment type="induction">
    <text evidence="5 6">By infection with the fungal pathogens B.cinerea and A.brassicicola, and avirulent and virulent strains of P.syringae pv tomato DC3000 (at protein level). Induced by ethylene and copper.</text>
</comment>
<comment type="domain">
    <text evidence="1">The nitrogen atoms of the two glycine residues in the GGXR motif define the oxyanion hole, and stabilize the oxyanion that forms during the nucleophilic attack by the catalytic serine during substrate cleavage.</text>
</comment>
<comment type="disruption phenotype">
    <text evidence="8">No visible phenotype under normal growth conditions, but leaves of mutant plants contain decreased levels of lysophosphatidylcholine (LPC) and lysophosphatidylethanolamine(LPE), but increased levels of free linolenic acid, jasmonic acid and methyl jasmonate, as well as the oxylipin-biosynthetic intermediates 13-hydroperoxylinolenic acid and 12-oxophytodienoic acid.</text>
</comment>
<comment type="similarity">
    <text evidence="9">Belongs to the patatin family.</text>
</comment>
<comment type="sequence caution" evidence="9">
    <conflict type="erroneous initiation">
        <sequence resource="EMBL-CDS" id="AAM63157"/>
    </conflict>
    <text>Truncated N-terminus.</text>
</comment>
<gene>
    <name type="primary">PLP2</name>
    <name type="ordered locus">At2g26560</name>
    <name type="ORF">T9J22.23</name>
</gene>
<dbReference type="EC" id="3.1.1.-"/>
<dbReference type="EMBL" id="AC002505">
    <property type="protein sequence ID" value="AAC14504.1"/>
    <property type="molecule type" value="Genomic_DNA"/>
</dbReference>
<dbReference type="EMBL" id="CP002685">
    <property type="protein sequence ID" value="AEC07858.1"/>
    <property type="molecule type" value="Genomic_DNA"/>
</dbReference>
<dbReference type="EMBL" id="AY062644">
    <property type="protein sequence ID" value="AAL32722.1"/>
    <property type="molecule type" value="mRNA"/>
</dbReference>
<dbReference type="EMBL" id="AY093305">
    <property type="protein sequence ID" value="AAM13304.1"/>
    <property type="molecule type" value="mRNA"/>
</dbReference>
<dbReference type="EMBL" id="AY085946">
    <property type="protein sequence ID" value="AAM63157.1"/>
    <property type="status" value="ALT_INIT"/>
    <property type="molecule type" value="mRNA"/>
</dbReference>
<dbReference type="PIR" id="T00989">
    <property type="entry name" value="T00989"/>
</dbReference>
<dbReference type="SMR" id="O48723"/>
<dbReference type="BioGRID" id="2549">
    <property type="interactions" value="4"/>
</dbReference>
<dbReference type="FunCoup" id="O48723">
    <property type="interactions" value="91"/>
</dbReference>
<dbReference type="IntAct" id="O48723">
    <property type="interactions" value="3"/>
</dbReference>
<dbReference type="STRING" id="3702.O48723"/>
<dbReference type="PaxDb" id="3702-AT2G26560.1"/>
<dbReference type="ProteomicsDB" id="236635"/>
<dbReference type="DNASU" id="817197"/>
<dbReference type="EnsemblPlants" id="AT2G26560.1">
    <property type="protein sequence ID" value="AT2G26560.1"/>
    <property type="gene ID" value="AT2G26560"/>
</dbReference>
<dbReference type="GeneID" id="817197"/>
<dbReference type="Gramene" id="AT2G26560.1">
    <property type="protein sequence ID" value="AT2G26560.1"/>
    <property type="gene ID" value="AT2G26560"/>
</dbReference>
<dbReference type="KEGG" id="ath:AT2G26560"/>
<dbReference type="Araport" id="AT2G26560"/>
<dbReference type="TAIR" id="AT2G26560">
    <property type="gene designation" value="PLA2A"/>
</dbReference>
<dbReference type="eggNOG" id="KOG0513">
    <property type="taxonomic scope" value="Eukaryota"/>
</dbReference>
<dbReference type="HOGENOM" id="CLU_000288_144_0_1"/>
<dbReference type="InParanoid" id="O48723"/>
<dbReference type="OMA" id="MSEHRAW"/>
<dbReference type="OrthoDB" id="1658288at2759"/>
<dbReference type="PhylomeDB" id="O48723"/>
<dbReference type="BioCyc" id="ARA:AT2G26560-MONOMER"/>
<dbReference type="BRENDA" id="3.1.1.23">
    <property type="organism ID" value="399"/>
</dbReference>
<dbReference type="PRO" id="PR:O48723"/>
<dbReference type="Proteomes" id="UP000006548">
    <property type="component" value="Chromosome 2"/>
</dbReference>
<dbReference type="ExpressionAtlas" id="O48723">
    <property type="expression patterns" value="baseline and differential"/>
</dbReference>
<dbReference type="GO" id="GO:0005737">
    <property type="term" value="C:cytoplasm"/>
    <property type="evidence" value="ECO:0000314"/>
    <property type="project" value="TAIR"/>
</dbReference>
<dbReference type="GO" id="GO:0016020">
    <property type="term" value="C:membrane"/>
    <property type="evidence" value="ECO:0000314"/>
    <property type="project" value="TAIR"/>
</dbReference>
<dbReference type="GO" id="GO:0005777">
    <property type="term" value="C:peroxisome"/>
    <property type="evidence" value="ECO:0007005"/>
    <property type="project" value="TAIR"/>
</dbReference>
<dbReference type="GO" id="GO:0042802">
    <property type="term" value="F:identical protein binding"/>
    <property type="evidence" value="ECO:0000353"/>
    <property type="project" value="IntAct"/>
</dbReference>
<dbReference type="GO" id="GO:0016298">
    <property type="term" value="F:lipase activity"/>
    <property type="evidence" value="ECO:0000314"/>
    <property type="project" value="TAIR"/>
</dbReference>
<dbReference type="GO" id="GO:0071456">
    <property type="term" value="P:cellular response to hypoxia"/>
    <property type="evidence" value="ECO:0000270"/>
    <property type="project" value="TAIR"/>
</dbReference>
<dbReference type="GO" id="GO:0051607">
    <property type="term" value="P:defense response to virus"/>
    <property type="evidence" value="ECO:0000315"/>
    <property type="project" value="TAIR"/>
</dbReference>
<dbReference type="GO" id="GO:0016042">
    <property type="term" value="P:lipid catabolic process"/>
    <property type="evidence" value="ECO:0007669"/>
    <property type="project" value="UniProtKB-KW"/>
</dbReference>
<dbReference type="GO" id="GO:0006629">
    <property type="term" value="P:lipid metabolic process"/>
    <property type="evidence" value="ECO:0000314"/>
    <property type="project" value="TAIR"/>
</dbReference>
<dbReference type="GO" id="GO:0031408">
    <property type="term" value="P:oxylipin biosynthetic process"/>
    <property type="evidence" value="ECO:0000315"/>
    <property type="project" value="TAIR"/>
</dbReference>
<dbReference type="GO" id="GO:0009626">
    <property type="term" value="P:plant-type hypersensitive response"/>
    <property type="evidence" value="ECO:0000315"/>
    <property type="project" value="TAIR"/>
</dbReference>
<dbReference type="GO" id="GO:0046686">
    <property type="term" value="P:response to cadmium ion"/>
    <property type="evidence" value="ECO:0000270"/>
    <property type="project" value="TAIR"/>
</dbReference>
<dbReference type="CDD" id="cd07214">
    <property type="entry name" value="Pat17_isozyme_like"/>
    <property type="match status" value="1"/>
</dbReference>
<dbReference type="FunFam" id="3.40.1090.10:FF:000005">
    <property type="entry name" value="Patatin"/>
    <property type="match status" value="1"/>
</dbReference>
<dbReference type="Gene3D" id="3.40.1090.10">
    <property type="entry name" value="Cytosolic phospholipase A2 catalytic domain"/>
    <property type="match status" value="1"/>
</dbReference>
<dbReference type="InterPro" id="IPR016035">
    <property type="entry name" value="Acyl_Trfase/lysoPLipase"/>
</dbReference>
<dbReference type="InterPro" id="IPR002641">
    <property type="entry name" value="PNPLA_dom"/>
</dbReference>
<dbReference type="PANTHER" id="PTHR32176:SF109">
    <property type="entry name" value="PATATIN-LIKE PROTEIN 2"/>
    <property type="match status" value="1"/>
</dbReference>
<dbReference type="PANTHER" id="PTHR32176">
    <property type="entry name" value="XYLOSE ISOMERASE"/>
    <property type="match status" value="1"/>
</dbReference>
<dbReference type="Pfam" id="PF01734">
    <property type="entry name" value="Patatin"/>
    <property type="match status" value="1"/>
</dbReference>
<dbReference type="SUPFAM" id="SSF52151">
    <property type="entry name" value="FabD/lysophospholipase-like"/>
    <property type="match status" value="1"/>
</dbReference>
<dbReference type="PROSITE" id="PS51635">
    <property type="entry name" value="PNPLA"/>
    <property type="match status" value="1"/>
</dbReference>
<name>PLP2_ARATH</name>
<reference key="1">
    <citation type="journal article" date="1999" name="Nature">
        <title>Sequence and analysis of chromosome 2 of the plant Arabidopsis thaliana.</title>
        <authorList>
            <person name="Lin X."/>
            <person name="Kaul S."/>
            <person name="Rounsley S.D."/>
            <person name="Shea T.P."/>
            <person name="Benito M.-I."/>
            <person name="Town C.D."/>
            <person name="Fujii C.Y."/>
            <person name="Mason T.M."/>
            <person name="Bowman C.L."/>
            <person name="Barnstead M.E."/>
            <person name="Feldblyum T.V."/>
            <person name="Buell C.R."/>
            <person name="Ketchum K.A."/>
            <person name="Lee J.J."/>
            <person name="Ronning C.M."/>
            <person name="Koo H.L."/>
            <person name="Moffat K.S."/>
            <person name="Cronin L.A."/>
            <person name="Shen M."/>
            <person name="Pai G."/>
            <person name="Van Aken S."/>
            <person name="Umayam L."/>
            <person name="Tallon L.J."/>
            <person name="Gill J.E."/>
            <person name="Adams M.D."/>
            <person name="Carrera A.J."/>
            <person name="Creasy T.H."/>
            <person name="Goodman H.M."/>
            <person name="Somerville C.R."/>
            <person name="Copenhaver G.P."/>
            <person name="Preuss D."/>
            <person name="Nierman W.C."/>
            <person name="White O."/>
            <person name="Eisen J.A."/>
            <person name="Salzberg S.L."/>
            <person name="Fraser C.M."/>
            <person name="Venter J.C."/>
        </authorList>
    </citation>
    <scope>NUCLEOTIDE SEQUENCE [LARGE SCALE GENOMIC DNA]</scope>
    <source>
        <strain>cv. Columbia</strain>
    </source>
</reference>
<reference key="2">
    <citation type="journal article" date="2017" name="Plant J.">
        <title>Araport11: a complete reannotation of the Arabidopsis thaliana reference genome.</title>
        <authorList>
            <person name="Cheng C.Y."/>
            <person name="Krishnakumar V."/>
            <person name="Chan A.P."/>
            <person name="Thibaud-Nissen F."/>
            <person name="Schobel S."/>
            <person name="Town C.D."/>
        </authorList>
    </citation>
    <scope>GENOME REANNOTATION</scope>
    <source>
        <strain>cv. Columbia</strain>
    </source>
</reference>
<reference key="3">
    <citation type="journal article" date="2003" name="Science">
        <title>Empirical analysis of transcriptional activity in the Arabidopsis genome.</title>
        <authorList>
            <person name="Yamada K."/>
            <person name="Lim J."/>
            <person name="Dale J.M."/>
            <person name="Chen H."/>
            <person name="Shinn P."/>
            <person name="Palm C.J."/>
            <person name="Southwick A.M."/>
            <person name="Wu H.C."/>
            <person name="Kim C.J."/>
            <person name="Nguyen M."/>
            <person name="Pham P.K."/>
            <person name="Cheuk R.F."/>
            <person name="Karlin-Newmann G."/>
            <person name="Liu S.X."/>
            <person name="Lam B."/>
            <person name="Sakano H."/>
            <person name="Wu T."/>
            <person name="Yu G."/>
            <person name="Miranda M."/>
            <person name="Quach H.L."/>
            <person name="Tripp M."/>
            <person name="Chang C.H."/>
            <person name="Lee J.M."/>
            <person name="Toriumi M.J."/>
            <person name="Chan M.M."/>
            <person name="Tang C.C."/>
            <person name="Onodera C.S."/>
            <person name="Deng J.M."/>
            <person name="Akiyama K."/>
            <person name="Ansari Y."/>
            <person name="Arakawa T."/>
            <person name="Banh J."/>
            <person name="Banno F."/>
            <person name="Bowser L."/>
            <person name="Brooks S.Y."/>
            <person name="Carninci P."/>
            <person name="Chao Q."/>
            <person name="Choy N."/>
            <person name="Enju A."/>
            <person name="Goldsmith A.D."/>
            <person name="Gurjal M."/>
            <person name="Hansen N.F."/>
            <person name="Hayashizaki Y."/>
            <person name="Johnson-Hopson C."/>
            <person name="Hsuan V.W."/>
            <person name="Iida K."/>
            <person name="Karnes M."/>
            <person name="Khan S."/>
            <person name="Koesema E."/>
            <person name="Ishida J."/>
            <person name="Jiang P.X."/>
            <person name="Jones T."/>
            <person name="Kawai J."/>
            <person name="Kamiya A."/>
            <person name="Meyers C."/>
            <person name="Nakajima M."/>
            <person name="Narusaka M."/>
            <person name="Seki M."/>
            <person name="Sakurai T."/>
            <person name="Satou M."/>
            <person name="Tamse R."/>
            <person name="Vaysberg M."/>
            <person name="Wallender E.K."/>
            <person name="Wong C."/>
            <person name="Yamamura Y."/>
            <person name="Yuan S."/>
            <person name="Shinozaki K."/>
            <person name="Davis R.W."/>
            <person name="Theologis A."/>
            <person name="Ecker J.R."/>
        </authorList>
    </citation>
    <scope>NUCLEOTIDE SEQUENCE [LARGE SCALE MRNA]</scope>
    <source>
        <strain>cv. Columbia</strain>
    </source>
</reference>
<reference key="4">
    <citation type="submission" date="2002-03" db="EMBL/GenBank/DDBJ databases">
        <title>Full-length cDNA from Arabidopsis thaliana.</title>
        <authorList>
            <person name="Brover V.V."/>
            <person name="Troukhan M.E."/>
            <person name="Alexandrov N.A."/>
            <person name="Lu Y.-P."/>
            <person name="Flavell R.B."/>
            <person name="Feldmann K.A."/>
        </authorList>
    </citation>
    <scope>NUCLEOTIDE SEQUENCE [LARGE SCALE MRNA]</scope>
</reference>
<reference key="5">
    <citation type="journal article" date="2002" name="Plant Physiol.">
        <title>Molecular identification of cytosolic, patatin-related phospholipases A from Arabidopsis with potential functions in plant signal transduction.</title>
        <authorList>
            <person name="Holk A."/>
            <person name="Rietz S."/>
            <person name="Zahn M."/>
            <person name="Quader H."/>
            <person name="Scherer G.F."/>
        </authorList>
    </citation>
    <scope>SUBCELLULAR LOCATION</scope>
    <scope>TISSUE SPECIFICITY</scope>
</reference>
<reference key="6">
    <citation type="journal article" date="2003" name="Plant Cell Physiol.">
        <title>Expression profiles of Arabidopsis phospholipase A IIA gene in response to biotic and abiotic stresses.</title>
        <authorList>
            <person name="Narusaka Y."/>
            <person name="Narusaka M."/>
            <person name="Seki M."/>
            <person name="Fujita M."/>
            <person name="Ishida J."/>
            <person name="Nakashima M."/>
            <person name="Enju A."/>
            <person name="Sakurai T."/>
            <person name="Satou M."/>
            <person name="Kamiya A."/>
            <person name="Park P."/>
            <person name="Kobayashi M."/>
            <person name="Shinozaki K."/>
        </authorList>
    </citation>
    <scope>INDUCTION</scope>
</reference>
<reference key="7">
    <citation type="journal article" date="2005" name="Plant J.">
        <title>A pathogen-inducible patatin-like lipid acyl hydrolase facilitates fungal and bacterial host colonization in Arabidopsis.</title>
        <authorList>
            <person name="La Camera S."/>
            <person name="Geoffroy P."/>
            <person name="Samaha H."/>
            <person name="Ndiaye A."/>
            <person name="Rahim G."/>
            <person name="Legrand M."/>
            <person name="Heitz T."/>
        </authorList>
    </citation>
    <scope>FUNCTION</scope>
    <scope>SUBCELLULAR LOCATION</scope>
    <scope>INDUCTION</scope>
</reference>
<reference key="8">
    <citation type="journal article" date="2009" name="Mol. Plant Microbe Interact.">
        <title>The Arabidopsis patatin-like protein 2 (PLP2) plays an essential role in cell death execution and differentially affects biosynthesis of oxylipins and resistance to pathogens.</title>
        <authorList>
            <person name="La Camera S."/>
            <person name="Balague C."/>
            <person name="Gobel C."/>
            <person name="Geoffroy P."/>
            <person name="Legrand M."/>
            <person name="Feussner I."/>
            <person name="Roby D."/>
            <person name="Heitz T."/>
        </authorList>
    </citation>
    <scope>FUNCTION</scope>
</reference>
<reference key="9">
    <citation type="journal article" date="2012" name="Mol. Plant">
        <title>The patatin-containing phospholipase A pPLAIIalpha modulates oxylipin formation and water loss in Arabidopsis thaliana.</title>
        <authorList>
            <person name="Yang W.Y."/>
            <person name="Zheng Y."/>
            <person name="Bahn S.C."/>
            <person name="Pan X.Q."/>
            <person name="Li M.Y."/>
            <person name="Vu H.S."/>
            <person name="Roth M.R."/>
            <person name="Scheu B."/>
            <person name="Welti R."/>
            <person name="Hong Y.Y."/>
            <person name="Wang X.M."/>
        </authorList>
    </citation>
    <scope>FUNCTION</scope>
    <scope>DISRUPTION PHENOTYPE</scope>
</reference>
<protein>
    <recommendedName>
        <fullName>Patatin-like protein 2</fullName>
        <shortName>AtPLP2</shortName>
        <ecNumber>3.1.1.-</ecNumber>
    </recommendedName>
    <alternativeName>
        <fullName>Patatin-related phospholipase A IIalpha</fullName>
        <shortName>pPLAIIa</shortName>
    </alternativeName>
    <alternativeName>
        <fullName>Phospholipase A IIA</fullName>
        <shortName>AtPLAIIA</shortName>
    </alternativeName>
</protein>
<evidence type="ECO:0000250" key="1"/>
<evidence type="ECO:0000250" key="2">
    <source>
        <dbReference type="UniProtKB" id="O23179"/>
    </source>
</evidence>
<evidence type="ECO:0000255" key="3">
    <source>
        <dbReference type="PROSITE-ProRule" id="PRU01161"/>
    </source>
</evidence>
<evidence type="ECO:0000269" key="4">
    <source>
    </source>
</evidence>
<evidence type="ECO:0000269" key="5">
    <source>
    </source>
</evidence>
<evidence type="ECO:0000269" key="6">
    <source>
    </source>
</evidence>
<evidence type="ECO:0000269" key="7">
    <source>
    </source>
</evidence>
<evidence type="ECO:0000269" key="8">
    <source>
    </source>
</evidence>
<evidence type="ECO:0000305" key="9"/>
<accession>O48723</accession>
<accession>Q8LDK8</accession>
<proteinExistence type="evidence at protein level"/>